<organism>
    <name type="scientific">Enterobacter agglomerans</name>
    <name type="common">Erwinia herbicola</name>
    <name type="synonym">Pantoea agglomerans</name>
    <dbReference type="NCBI Taxonomy" id="549"/>
    <lineage>
        <taxon>Bacteria</taxon>
        <taxon>Pseudomonadati</taxon>
        <taxon>Pseudomonadota</taxon>
        <taxon>Gammaproteobacteria</taxon>
        <taxon>Enterobacterales</taxon>
        <taxon>Erwiniaceae</taxon>
        <taxon>Pantoea</taxon>
        <taxon>Pantoea agglomerans group</taxon>
    </lineage>
</organism>
<reference key="1">
    <citation type="journal article" date="1998" name="Mol. Gen. Genet.">
        <title>The gene for indole-3-acetyl-L-aspartic acid hydrolase from Enterobacter agglomerans: molecular cloning, nucleotide sequence, and expression in Escherichia coli.</title>
        <authorList>
            <person name="Chou J.-C."/>
            <person name="Mulbry W.W."/>
            <person name="Cohen J.D."/>
        </authorList>
    </citation>
    <scope>NUCLEOTIDE SEQUENCE [GENOMIC DNA]</scope>
    <scope>PROTEIN SEQUENCE OF 2-14; 39-54; 177-187; 334-352 AND 358-367</scope>
    <scope>FUNCTION</scope>
    <scope>CATALYTIC ACTIVITY</scope>
    <source>
        <strain>GK12</strain>
    </source>
</reference>
<reference key="2">
    <citation type="journal article" date="1996" name="Plant Physiol.">
        <title>Partial purification and characterization of an inducible indole-3-acetyl-L-aspartic acid hydrolase from Enterobacter agglomerans.</title>
        <authorList>
            <person name="Chou J.C."/>
            <person name="Kuleck G.A."/>
            <person name="Cohen J.D."/>
            <person name="Mulbry W.W."/>
        </authorList>
    </citation>
    <scope>FUNCTION</scope>
    <scope>CATALYTIC ACTIVITY</scope>
    <scope>SUBSTRATE SPECIFICITY</scope>
    <scope>BIOPHYSICOCHEMICAL PROPERTIES</scope>
    <scope>SUBUNIT</scope>
    <source>
        <strain>GK12</strain>
    </source>
</reference>
<dbReference type="EC" id="3.5.1.134" evidence="1 2"/>
<dbReference type="EMBL" id="AF006687">
    <property type="protein sequence ID" value="AAC61782.1"/>
    <property type="molecule type" value="Genomic_DNA"/>
</dbReference>
<dbReference type="PIR" id="T44439">
    <property type="entry name" value="T44439"/>
</dbReference>
<dbReference type="SMR" id="O50173"/>
<dbReference type="MEROPS" id="M20.020"/>
<dbReference type="KEGG" id="ag:AAC61782"/>
<dbReference type="BRENDA" id="3.5.1.134">
    <property type="organism ID" value="2084"/>
</dbReference>
<dbReference type="GO" id="GO:0005737">
    <property type="term" value="C:cytoplasm"/>
    <property type="evidence" value="ECO:0007669"/>
    <property type="project" value="TreeGrafter"/>
</dbReference>
<dbReference type="GO" id="GO:0016805">
    <property type="term" value="F:dipeptidase activity"/>
    <property type="evidence" value="ECO:0007669"/>
    <property type="project" value="TreeGrafter"/>
</dbReference>
<dbReference type="GO" id="GO:0071713">
    <property type="term" value="F:para-aminobenzoyl-glutamate hydrolase activity"/>
    <property type="evidence" value="ECO:0007669"/>
    <property type="project" value="TreeGrafter"/>
</dbReference>
<dbReference type="GO" id="GO:0046657">
    <property type="term" value="P:folic acid catabolic process"/>
    <property type="evidence" value="ECO:0007669"/>
    <property type="project" value="TreeGrafter"/>
</dbReference>
<dbReference type="CDD" id="cd05665">
    <property type="entry name" value="M20_Acy1_IAAspH"/>
    <property type="match status" value="1"/>
</dbReference>
<dbReference type="FunFam" id="3.40.630.10:FF:000080">
    <property type="entry name" value="p-aminobenzoyl-glutamate hydrolase subunit A"/>
    <property type="match status" value="1"/>
</dbReference>
<dbReference type="FunFam" id="3.40.630.10:FF:000077">
    <property type="entry name" value="p-aminobenzoyl-glutamate hydrolase, A subunit"/>
    <property type="match status" value="1"/>
</dbReference>
<dbReference type="Gene3D" id="3.40.630.10">
    <property type="entry name" value="Zn peptidases"/>
    <property type="match status" value="2"/>
</dbReference>
<dbReference type="InterPro" id="IPR033845">
    <property type="entry name" value="AbgA"/>
</dbReference>
<dbReference type="InterPro" id="IPR017439">
    <property type="entry name" value="Amidohydrolase"/>
</dbReference>
<dbReference type="InterPro" id="IPR036264">
    <property type="entry name" value="Bact_exopeptidase_dim_dom"/>
</dbReference>
<dbReference type="InterPro" id="IPR002933">
    <property type="entry name" value="Peptidase_M20"/>
</dbReference>
<dbReference type="InterPro" id="IPR052030">
    <property type="entry name" value="Peptidase_M20/M20A_hydrolases"/>
</dbReference>
<dbReference type="InterPro" id="IPR011650">
    <property type="entry name" value="Peptidase_M20_dimer"/>
</dbReference>
<dbReference type="NCBIfam" id="TIGR01891">
    <property type="entry name" value="amidohydrolases"/>
    <property type="match status" value="1"/>
</dbReference>
<dbReference type="PANTHER" id="PTHR30575">
    <property type="entry name" value="PEPTIDASE M20"/>
    <property type="match status" value="1"/>
</dbReference>
<dbReference type="PANTHER" id="PTHR30575:SF3">
    <property type="entry name" value="PEPTIDASE M20 DIMERISATION DOMAIN-CONTAINING PROTEIN"/>
    <property type="match status" value="1"/>
</dbReference>
<dbReference type="Pfam" id="PF07687">
    <property type="entry name" value="M20_dimer"/>
    <property type="match status" value="1"/>
</dbReference>
<dbReference type="Pfam" id="PF01546">
    <property type="entry name" value="Peptidase_M20"/>
    <property type="match status" value="1"/>
</dbReference>
<dbReference type="PIRSF" id="PIRSF005962">
    <property type="entry name" value="Pept_M20D_amidohydro"/>
    <property type="match status" value="1"/>
</dbReference>
<dbReference type="SUPFAM" id="SSF55031">
    <property type="entry name" value="Bacterial exopeptidase dimerisation domain"/>
    <property type="match status" value="1"/>
</dbReference>
<dbReference type="SUPFAM" id="SSF53187">
    <property type="entry name" value="Zn-dependent exopeptidases"/>
    <property type="match status" value="1"/>
</dbReference>
<evidence type="ECO:0000269" key="1">
    <source>
    </source>
</evidence>
<evidence type="ECO:0000269" key="2">
    <source>
    </source>
</evidence>
<evidence type="ECO:0000303" key="3">
    <source>
    </source>
</evidence>
<evidence type="ECO:0000303" key="4">
    <source>
    </source>
</evidence>
<evidence type="ECO:0000305" key="5"/>
<protein>
    <recommendedName>
        <fullName evidence="3">Indole-3-acetyl-aspartic acid hydrolase</fullName>
        <ecNumber evidence="1 2">3.5.1.134</ecNumber>
    </recommendedName>
    <alternativeName>
        <fullName evidence="3">IAA-Asp hydrolase</fullName>
    </alternativeName>
</protein>
<sequence>MPLLNEYIRQLLPEMTQWRRDLHHYAESGWVEFRTASKVAEQLHQLGYDLTLGRDAVDADSRMGLPDEITLANAFQRAREQGAPEPWLSAFEGGFTGIVATLDTGRPGPTLAFRVDMDALDLNEDTDGHHRPFREDFASCNPGMMHACGHDGHTAIGLGLAHVLKQYADRLHGVIKLIFQPAEEGTRGARAMVAAGVVDDVDYFTAIHIGTGVPAGTVVCGSDNFMATTKFDALFTGVAAHAGGKPEDGRNALLAAAQAAIALHAIAPHSAGASRVNVGVMQAGTGRNVVPSGALLKVETRGETEDINRYVFERAREVIHGAAAMYGASVELRLMGAATSSAPSPGWVHYLREQAARVPGVEQAIDRIAAPAGSEDATLMMARVQQHNGLASYMVFGTELSAGHHNEQFDFDENVMAIAVETLALTALNFPWQRGV</sequence>
<feature type="initiator methionine" description="Removed" evidence="2">
    <location>
        <position position="1"/>
    </location>
</feature>
<feature type="chain" id="PRO_0000061960" description="Indole-3-acetyl-aspartic acid hydrolase">
    <location>
        <begin position="2"/>
        <end position="436"/>
    </location>
</feature>
<comment type="function">
    <text evidence="1 2">Hydrolyzes indole-3-acetyl-aspartate (IAA-Asp) to indole-3-acetic acid (IAA) (PubMed:12226446, PubMed:9747708). Shows an exclusively high substrate specificity for IAA-Asp (PubMed:12226446).</text>
</comment>
<comment type="catalytic activity">
    <reaction evidence="1 2">
        <text>(indol-3-yl)acetyl-L-aspartate + H2O = (indol-3-yl)acetate + L-aspartate</text>
        <dbReference type="Rhea" id="RHEA:60428"/>
        <dbReference type="ChEBI" id="CHEBI:15377"/>
        <dbReference type="ChEBI" id="CHEBI:29991"/>
        <dbReference type="ChEBI" id="CHEBI:30854"/>
        <dbReference type="ChEBI" id="CHEBI:133482"/>
        <dbReference type="EC" id="3.5.1.134"/>
    </reaction>
    <physiologicalReaction direction="left-to-right" evidence="1">
        <dbReference type="Rhea" id="RHEA:60429"/>
    </physiologicalReaction>
</comment>
<comment type="biophysicochemical properties">
    <kinetics>
        <KM evidence="1">13.52 mM for (indol-3-yl)acetyl-L-aspartate</KM>
    </kinetics>
    <phDependence>
        <text evidence="1">Optimum pH is 8-8.5.</text>
    </phDependence>
</comment>
<comment type="subunit">
    <text evidence="1">Monomer.</text>
</comment>
<comment type="similarity">
    <text evidence="5">Belongs to the peptidase M20 family.</text>
</comment>
<proteinExistence type="evidence at protein level"/>
<name>IAASH_ENTAG</name>
<keyword id="KW-0903">Direct protein sequencing</keyword>
<keyword id="KW-0378">Hydrolase</keyword>
<gene>
    <name evidence="4" type="primary">iaaspH</name>
</gene>
<accession>O50173</accession>